<comment type="function">
    <text evidence="3">Alpha-2,8-sialyltransferase that prefers O-glycans to N-glycans or glycolipids as acceptor substrates. The minimal acceptor substrate is the NeuAc-alpha-2,3(6)-Gal sequence at the non-reducing end of their carbohydrate groups.</text>
</comment>
<comment type="catalytic activity">
    <reaction evidence="3">
        <text>a ganglioside GM3 + CMP-N-acetyl-beta-neuraminate = a ganglioside GD3 + CMP + H(+)</text>
        <dbReference type="Rhea" id="RHEA:48288"/>
        <dbReference type="ChEBI" id="CHEBI:15378"/>
        <dbReference type="ChEBI" id="CHEBI:57812"/>
        <dbReference type="ChEBI" id="CHEBI:60377"/>
        <dbReference type="ChEBI" id="CHEBI:79210"/>
        <dbReference type="ChEBI" id="CHEBI:79214"/>
    </reaction>
</comment>
<comment type="catalytic activity">
    <reaction evidence="3">
        <text>a ganglioside GM3 (d18:1(4E)) + CMP-N-acetyl-beta-neuraminate = a ganglioside GD3 (d18:1(4E)) + CMP + H(+)</text>
        <dbReference type="Rhea" id="RHEA:41760"/>
        <dbReference type="ChEBI" id="CHEBI:15378"/>
        <dbReference type="ChEBI" id="CHEBI:57812"/>
        <dbReference type="ChEBI" id="CHEBI:60065"/>
        <dbReference type="ChEBI" id="CHEBI:60377"/>
        <dbReference type="ChEBI" id="CHEBI:78436"/>
    </reaction>
</comment>
<comment type="catalytic activity">
    <reaction evidence="3">
        <text>a ganglioside GD1a (d18:1(4E)) + CMP-N-acetyl-beta-neuraminate = a ganglioside GT1a (d18:1(4E)) + CMP + H(+)</text>
        <dbReference type="Rhea" id="RHEA:41768"/>
        <dbReference type="ChEBI" id="CHEBI:15378"/>
        <dbReference type="ChEBI" id="CHEBI:57812"/>
        <dbReference type="ChEBI" id="CHEBI:60377"/>
        <dbReference type="ChEBI" id="CHEBI:78445"/>
        <dbReference type="ChEBI" id="CHEBI:78447"/>
    </reaction>
</comment>
<comment type="catalytic activity">
    <reaction evidence="3">
        <text>a ganglioside GD1a + CMP-N-acetyl-beta-neuraminate = a ganglioside GT1a + CMP + H(+)</text>
        <dbReference type="Rhea" id="RHEA:48912"/>
        <dbReference type="ChEBI" id="CHEBI:15378"/>
        <dbReference type="ChEBI" id="CHEBI:57812"/>
        <dbReference type="ChEBI" id="CHEBI:60377"/>
        <dbReference type="ChEBI" id="CHEBI:82637"/>
        <dbReference type="ChEBI" id="CHEBI:90501"/>
    </reaction>
</comment>
<comment type="catalytic activity">
    <reaction evidence="3">
        <text>a ganglioside GM1b (d18:1(4E)) + CMP-N-acetyl-beta-neuraminate = a ganglioside GD1c (d18:1(4E)) + CMP + H(+)</text>
        <dbReference type="Rhea" id="RHEA:47576"/>
        <dbReference type="ChEBI" id="CHEBI:15378"/>
        <dbReference type="ChEBI" id="CHEBI:57812"/>
        <dbReference type="ChEBI" id="CHEBI:60377"/>
        <dbReference type="ChEBI" id="CHEBI:78568"/>
        <dbReference type="ChEBI" id="CHEBI:87787"/>
    </reaction>
</comment>
<comment type="catalytic activity">
    <reaction evidence="3">
        <text>a ganglioside GM1b + CMP-N-acetyl-beta-neuraminate = a ganglioside GD1c + CMP + H(+)</text>
        <dbReference type="Rhea" id="RHEA:48916"/>
        <dbReference type="ChEBI" id="CHEBI:15378"/>
        <dbReference type="ChEBI" id="CHEBI:57812"/>
        <dbReference type="ChEBI" id="CHEBI:60377"/>
        <dbReference type="ChEBI" id="CHEBI:90151"/>
        <dbReference type="ChEBI" id="CHEBI:90856"/>
    </reaction>
</comment>
<comment type="catalytic activity">
    <reaction evidence="3">
        <text>a ganglioside GM4 (d18:1(4E)) + CMP-N-acetyl-beta-neuraminate = an N-acetyl-alpha-neuraminosyl-(2-&gt;8)-N-acetyl-alpha-neuraminosyl-(2-&gt;3)-beta-D-galactosyl-(1&lt;-&gt;1')-N-acylsphing-4-enine + CMP + H(+)</text>
        <dbReference type="Rhea" id="RHEA:48924"/>
        <dbReference type="ChEBI" id="CHEBI:15378"/>
        <dbReference type="ChEBI" id="CHEBI:57812"/>
        <dbReference type="ChEBI" id="CHEBI:60377"/>
        <dbReference type="ChEBI" id="CHEBI:78482"/>
        <dbReference type="ChEBI" id="CHEBI:90858"/>
    </reaction>
</comment>
<comment type="catalytic activity">
    <reaction evidence="3">
        <text>N-acetyl-alpha-neuraminosyl-(2-&gt;3)-beta-D-galactosyl-(1&lt;-&gt;1')-ceramide + CMP-N-acetyl-beta-neuraminate = N-acetyl-alpha-neuraminosyl-(2-&gt;8)-N-acetyl-alpha-neuraminosyl-(2-&gt;3)-beta-D-galactosyl-(1&lt;-&gt;1')-ceramide + CMP + H(+)</text>
        <dbReference type="Rhea" id="RHEA:48928"/>
        <dbReference type="ChEBI" id="CHEBI:15378"/>
        <dbReference type="ChEBI" id="CHEBI:57812"/>
        <dbReference type="ChEBI" id="CHEBI:60377"/>
        <dbReference type="ChEBI" id="CHEBI:82643"/>
        <dbReference type="ChEBI" id="CHEBI:90859"/>
    </reaction>
</comment>
<comment type="catalytic activity">
    <reaction evidence="3">
        <text>a ganglioside GT1b (d18:1(4E)) + CMP-N-acetyl-beta-neuraminate = a ganglioside GQ1b (d18:1(4E)) + CMP + H(+)</text>
        <dbReference type="Rhea" id="RHEA:41772"/>
        <dbReference type="ChEBI" id="CHEBI:15378"/>
        <dbReference type="ChEBI" id="CHEBI:57812"/>
        <dbReference type="ChEBI" id="CHEBI:60377"/>
        <dbReference type="ChEBI" id="CHEBI:78452"/>
        <dbReference type="ChEBI" id="CHEBI:78455"/>
    </reaction>
</comment>
<comment type="catalytic activity">
    <reaction evidence="3">
        <text>a ganglioside GT1b + CMP-N-acetyl-beta-neuraminate = a ganglioside GQ1b + CMP + H(+)</text>
        <dbReference type="Rhea" id="RHEA:48932"/>
        <dbReference type="ChEBI" id="CHEBI:15378"/>
        <dbReference type="ChEBI" id="CHEBI:57812"/>
        <dbReference type="ChEBI" id="CHEBI:60377"/>
        <dbReference type="ChEBI" id="CHEBI:82940"/>
        <dbReference type="ChEBI" id="CHEBI:90862"/>
    </reaction>
</comment>
<comment type="pathway">
    <text>Protein modification; protein glycosylation.</text>
</comment>
<comment type="subcellular location">
    <subcellularLocation>
        <location evidence="4">Golgi apparatus membrane</location>
        <topology evidence="4">Single-pass type II membrane protein</topology>
    </subcellularLocation>
</comment>
<comment type="tissue specificity">
    <text evidence="3">Highly expressed in kidney and expressed and all tissues tested.</text>
</comment>
<comment type="similarity">
    <text evidence="4">Belongs to the glycosyltransferase 29 family.</text>
</comment>
<comment type="online information" name="Functional Glycomics Gateway - GTase">
    <link uri="http://www.functionalglycomics.org/glycomics/molecule/jsp/glycoEnzyme/viewGlycoEnzyme.jsp?gbpId=gt_mou_661"/>
    <text>ST8Sia VI</text>
</comment>
<dbReference type="EC" id="2.4.99.-"/>
<dbReference type="EMBL" id="AB059554">
    <property type="protein sequence ID" value="BAC01265.1"/>
    <property type="molecule type" value="mRNA"/>
</dbReference>
<dbReference type="CCDS" id="CCDS15697.1"/>
<dbReference type="RefSeq" id="NP_665837.1">
    <property type="nucleotide sequence ID" value="NM_145838.2"/>
</dbReference>
<dbReference type="SMR" id="Q8K4T1"/>
<dbReference type="BioGRID" id="232295">
    <property type="interactions" value="1"/>
</dbReference>
<dbReference type="FunCoup" id="Q8K4T1">
    <property type="interactions" value="515"/>
</dbReference>
<dbReference type="STRING" id="10090.ENSMUSP00000003509"/>
<dbReference type="SwissLipids" id="SLP:000001419"/>
<dbReference type="CAZy" id="GT29">
    <property type="family name" value="Glycosyltransferase Family 29"/>
</dbReference>
<dbReference type="GlyCosmos" id="Q8K4T1">
    <property type="glycosylation" value="4 sites, No reported glycans"/>
</dbReference>
<dbReference type="GlyGen" id="Q8K4T1">
    <property type="glycosylation" value="4 sites, 1 N-linked glycan (1 site)"/>
</dbReference>
<dbReference type="PhosphoSitePlus" id="Q8K4T1"/>
<dbReference type="PaxDb" id="10090-ENSMUSP00000003509"/>
<dbReference type="ProteomicsDB" id="257239"/>
<dbReference type="Antibodypedia" id="2510">
    <property type="antibodies" value="82 antibodies from 16 providers"/>
</dbReference>
<dbReference type="DNASU" id="241230"/>
<dbReference type="Ensembl" id="ENSMUST00000003509.10">
    <property type="protein sequence ID" value="ENSMUSP00000003509.9"/>
    <property type="gene ID" value="ENSMUSG00000003418.12"/>
</dbReference>
<dbReference type="GeneID" id="241230"/>
<dbReference type="KEGG" id="mmu:241230"/>
<dbReference type="UCSC" id="uc008ikc.2">
    <property type="organism name" value="mouse"/>
</dbReference>
<dbReference type="AGR" id="MGI:2386797"/>
<dbReference type="CTD" id="338596"/>
<dbReference type="MGI" id="MGI:2386797">
    <property type="gene designation" value="St8sia6"/>
</dbReference>
<dbReference type="VEuPathDB" id="HostDB:ENSMUSG00000003418"/>
<dbReference type="eggNOG" id="KOG2692">
    <property type="taxonomic scope" value="Eukaryota"/>
</dbReference>
<dbReference type="GeneTree" id="ENSGT01030000234535"/>
<dbReference type="HOGENOM" id="CLU_048583_1_1_1"/>
<dbReference type="InParanoid" id="Q8K4T1"/>
<dbReference type="OMA" id="KKNIFHM"/>
<dbReference type="OrthoDB" id="10264956at2759"/>
<dbReference type="PhylomeDB" id="Q8K4T1"/>
<dbReference type="TreeFam" id="TF323961"/>
<dbReference type="BRENDA" id="2.4.99.8">
    <property type="organism ID" value="3474"/>
</dbReference>
<dbReference type="Reactome" id="R-MMU-4085001">
    <property type="pathway name" value="Sialic acid metabolism"/>
</dbReference>
<dbReference type="Reactome" id="R-MMU-975577">
    <property type="pathway name" value="N-Glycan antennae elongation"/>
</dbReference>
<dbReference type="UniPathway" id="UPA00378"/>
<dbReference type="BioGRID-ORCS" id="241230">
    <property type="hits" value="1 hit in 80 CRISPR screens"/>
</dbReference>
<dbReference type="ChiTaRS" id="St8sia6">
    <property type="organism name" value="mouse"/>
</dbReference>
<dbReference type="PRO" id="PR:Q8K4T1"/>
<dbReference type="Proteomes" id="UP000000589">
    <property type="component" value="Chromosome 2"/>
</dbReference>
<dbReference type="RNAct" id="Q8K4T1">
    <property type="molecule type" value="protein"/>
</dbReference>
<dbReference type="Bgee" id="ENSMUSG00000003418">
    <property type="expression patterns" value="Expressed in conjunctival fornix and 154 other cell types or tissues"/>
</dbReference>
<dbReference type="ExpressionAtlas" id="Q8K4T1">
    <property type="expression patterns" value="baseline and differential"/>
</dbReference>
<dbReference type="GO" id="GO:0000139">
    <property type="term" value="C:Golgi membrane"/>
    <property type="evidence" value="ECO:0007669"/>
    <property type="project" value="UniProtKB-SubCell"/>
</dbReference>
<dbReference type="GO" id="GO:0008373">
    <property type="term" value="F:sialyltransferase activity"/>
    <property type="evidence" value="ECO:0000314"/>
    <property type="project" value="MGI"/>
</dbReference>
<dbReference type="GO" id="GO:0001835">
    <property type="term" value="P:blastocyst hatching"/>
    <property type="evidence" value="ECO:0000315"/>
    <property type="project" value="MGI"/>
</dbReference>
<dbReference type="GO" id="GO:0016051">
    <property type="term" value="P:carbohydrate biosynthetic process"/>
    <property type="evidence" value="ECO:0000314"/>
    <property type="project" value="MGI"/>
</dbReference>
<dbReference type="GO" id="GO:0001574">
    <property type="term" value="P:ganglioside biosynthetic process"/>
    <property type="evidence" value="ECO:0000314"/>
    <property type="project" value="BHF-UCL"/>
</dbReference>
<dbReference type="GO" id="GO:0009247">
    <property type="term" value="P:glycolipid biosynthetic process"/>
    <property type="evidence" value="ECO:0000314"/>
    <property type="project" value="MGI"/>
</dbReference>
<dbReference type="GO" id="GO:0009100">
    <property type="term" value="P:glycoprotein metabolic process"/>
    <property type="evidence" value="ECO:0000314"/>
    <property type="project" value="BHF-UCL"/>
</dbReference>
<dbReference type="GO" id="GO:0009311">
    <property type="term" value="P:oligosaccharide metabolic process"/>
    <property type="evidence" value="ECO:0000314"/>
    <property type="project" value="BHF-UCL"/>
</dbReference>
<dbReference type="GO" id="GO:0006493">
    <property type="term" value="P:protein O-linked glycosylation"/>
    <property type="evidence" value="ECO:0000314"/>
    <property type="project" value="MGI"/>
</dbReference>
<dbReference type="CDD" id="cd23991">
    <property type="entry name" value="GT29_ST8SIA6"/>
    <property type="match status" value="1"/>
</dbReference>
<dbReference type="FunFam" id="3.90.1480.20:FF:000001">
    <property type="entry name" value="ST8 alpha-N-acetyl-neuraminide alpha-2,8-sialyltransferase 2"/>
    <property type="match status" value="1"/>
</dbReference>
<dbReference type="Gene3D" id="3.90.1480.20">
    <property type="entry name" value="Glycosyl transferase family 29"/>
    <property type="match status" value="1"/>
</dbReference>
<dbReference type="InterPro" id="IPR001675">
    <property type="entry name" value="Glyco_trans_29"/>
</dbReference>
<dbReference type="InterPro" id="IPR050943">
    <property type="entry name" value="Glycosyltr_29_Sialyltrsf"/>
</dbReference>
<dbReference type="InterPro" id="IPR038578">
    <property type="entry name" value="GT29-like_sf"/>
</dbReference>
<dbReference type="InterPro" id="IPR012163">
    <property type="entry name" value="Sialyl_trans"/>
</dbReference>
<dbReference type="PANTHER" id="PTHR11987">
    <property type="entry name" value="ALPHA-2,8-SIALYLTRANSFERASE"/>
    <property type="match status" value="1"/>
</dbReference>
<dbReference type="PANTHER" id="PTHR11987:SF29">
    <property type="entry name" value="ALPHA-2,8-SIALYLTRANSFERASE 8F"/>
    <property type="match status" value="1"/>
</dbReference>
<dbReference type="Pfam" id="PF00777">
    <property type="entry name" value="Glyco_transf_29"/>
    <property type="match status" value="1"/>
</dbReference>
<dbReference type="PIRSF" id="PIRSF005557">
    <property type="entry name" value="Sialyl_trans"/>
    <property type="match status" value="1"/>
</dbReference>
<keyword id="KW-1015">Disulfide bond</keyword>
<keyword id="KW-0325">Glycoprotein</keyword>
<keyword id="KW-0328">Glycosyltransferase</keyword>
<keyword id="KW-0333">Golgi apparatus</keyword>
<keyword id="KW-0443">Lipid metabolism</keyword>
<keyword id="KW-0472">Membrane</keyword>
<keyword id="KW-1185">Reference proteome</keyword>
<keyword id="KW-0735">Signal-anchor</keyword>
<keyword id="KW-0808">Transferase</keyword>
<keyword id="KW-0812">Transmembrane</keyword>
<keyword id="KW-1133">Transmembrane helix</keyword>
<evidence type="ECO:0000250" key="1">
    <source>
        <dbReference type="UniProtKB" id="O43173"/>
    </source>
</evidence>
<evidence type="ECO:0000255" key="2"/>
<evidence type="ECO:0000269" key="3">
    <source>
    </source>
</evidence>
<evidence type="ECO:0000305" key="4"/>
<evidence type="ECO:0000312" key="5">
    <source>
        <dbReference type="MGI" id="MGI:2386797"/>
    </source>
</evidence>
<gene>
    <name evidence="5" type="primary">St8sia6</name>
    <name type="synonym">Siat8f</name>
</gene>
<proteinExistence type="evidence at protein level"/>
<organism>
    <name type="scientific">Mus musculus</name>
    <name type="common">Mouse</name>
    <dbReference type="NCBI Taxonomy" id="10090"/>
    <lineage>
        <taxon>Eukaryota</taxon>
        <taxon>Metazoa</taxon>
        <taxon>Chordata</taxon>
        <taxon>Craniata</taxon>
        <taxon>Vertebrata</taxon>
        <taxon>Euteleostomi</taxon>
        <taxon>Mammalia</taxon>
        <taxon>Eutheria</taxon>
        <taxon>Euarchontoglires</taxon>
        <taxon>Glires</taxon>
        <taxon>Rodentia</taxon>
        <taxon>Myomorpha</taxon>
        <taxon>Muroidea</taxon>
        <taxon>Muridae</taxon>
        <taxon>Murinae</taxon>
        <taxon>Mus</taxon>
        <taxon>Mus</taxon>
    </lineage>
</organism>
<feature type="chain" id="PRO_0000149300" description="Alpha-2,8-sialyltransferase 8F">
    <location>
        <begin position="1"/>
        <end position="398"/>
    </location>
</feature>
<feature type="topological domain" description="Cytoplasmic" evidence="2">
    <location>
        <begin position="1"/>
        <end position="3"/>
    </location>
</feature>
<feature type="transmembrane region" description="Helical; Signal-anchor for type II membrane protein" evidence="2">
    <location>
        <begin position="4"/>
        <end position="24"/>
    </location>
</feature>
<feature type="topological domain" description="Lumenal" evidence="2">
    <location>
        <begin position="25"/>
        <end position="398"/>
    </location>
</feature>
<feature type="active site" description="Proton donor/acceptor" evidence="1">
    <location>
        <position position="370"/>
    </location>
</feature>
<feature type="binding site" evidence="1">
    <location>
        <position position="214"/>
    </location>
    <ligand>
        <name>substrate</name>
    </ligand>
</feature>
<feature type="binding site" evidence="1">
    <location>
        <begin position="236"/>
        <end position="238"/>
    </location>
    <ligand>
        <name>substrate</name>
    </ligand>
</feature>
<feature type="binding site" evidence="1">
    <location>
        <begin position="322"/>
        <end position="324"/>
    </location>
    <ligand>
        <name>substrate</name>
    </ligand>
</feature>
<feature type="glycosylation site" description="N-linked (GlcNAc...) asparagine" evidence="2">
    <location>
        <position position="66"/>
    </location>
</feature>
<feature type="glycosylation site" description="N-linked (GlcNAc...) asparagine" evidence="2">
    <location>
        <position position="93"/>
    </location>
</feature>
<feature type="glycosylation site" description="N-linked (GlcNAc...) asparagine" evidence="2">
    <location>
        <position position="151"/>
    </location>
</feature>
<feature type="glycosylation site" description="N-linked (GlcNAc...) asparagine" evidence="2">
    <location>
        <position position="196"/>
    </location>
</feature>
<feature type="disulfide bond" evidence="1">
    <location>
        <begin position="186"/>
        <end position="335"/>
    </location>
</feature>
<feature type="disulfide bond" evidence="1">
    <location>
        <begin position="200"/>
        <end position="395"/>
    </location>
</feature>
<reference key="1">
    <citation type="journal article" date="2002" name="J. Biol. Chem.">
        <title>Molecular cloning and expression of a sixth type of alpha 2,8-sialyltransferase (ST8Sia VI) that sialylates O-glycans.</title>
        <authorList>
            <person name="Takashima S."/>
            <person name="Ishida H.K."/>
            <person name="Inazu T."/>
            <person name="Ando T."/>
            <person name="Ishida H."/>
            <person name="Kiso M."/>
            <person name="Tsuji S."/>
            <person name="Tsujimoto M."/>
        </authorList>
    </citation>
    <scope>NUCLEOTIDE SEQUENCE [MRNA]</scope>
    <scope>CHARACTERIZATION</scope>
    <scope>CATALYTIC ACTIVITY</scope>
    <scope>TISSUE SPECIFICITY</scope>
</reference>
<accession>Q8K4T1</accession>
<sequence length="398" mass="45428">MRSGGTLFALIGSLMLLLLLRMLWCPADAPARSRLLMEGSREDTSGTSAALKTLWSPTTPVPRTRNSTYLDEKTTQITEKCKDLQYSLNSLSNKTRRYSEDDYLQTITNIQRCPWNRQAEEYDNFRAKLASCCDAIQDFVVSQNNTPVGTNMSYEVESKKHIPIRENIFHMFPVSQPFVDYPYNQCAVVGNGGILNKSLCGAEIDKSDFVFRCNLPPITGSASKDVGSKTNLVTVNPSIITLKYQNLKEKKAQFLEDISTYGDAFLLLPAFSYRANTGISFKVYQTLKESKMRQKVLFFHPRYLRHLALFWRTKGVTAYRLSTGLMIASVAVELCENVKLYGFWPFSKTIEDTPLSHHYYDNMLPKHGFHQMPKEYSQMLQLHMRGILKLQFSKCETA</sequence>
<protein>
    <recommendedName>
        <fullName evidence="4">Alpha-2,8-sialyltransferase 8F</fullName>
        <ecNumber>2.4.99.-</ecNumber>
    </recommendedName>
    <alternativeName>
        <fullName>Sialyltransferase 8F</fullName>
        <shortName>SIAT8-F</shortName>
    </alternativeName>
    <alternativeName>
        <fullName>Sialyltransferase St8Sia VI</fullName>
        <shortName>ST8SiaVI</shortName>
    </alternativeName>
</protein>
<name>SIA8F_MOUSE</name>